<organism>
    <name type="scientific">Arabidopsis thaliana</name>
    <name type="common">Mouse-ear cress</name>
    <dbReference type="NCBI Taxonomy" id="3702"/>
    <lineage>
        <taxon>Eukaryota</taxon>
        <taxon>Viridiplantae</taxon>
        <taxon>Streptophyta</taxon>
        <taxon>Embryophyta</taxon>
        <taxon>Tracheophyta</taxon>
        <taxon>Spermatophyta</taxon>
        <taxon>Magnoliopsida</taxon>
        <taxon>eudicotyledons</taxon>
        <taxon>Gunneridae</taxon>
        <taxon>Pentapetalae</taxon>
        <taxon>rosids</taxon>
        <taxon>malvids</taxon>
        <taxon>Brassicales</taxon>
        <taxon>Brassicaceae</taxon>
        <taxon>Camelineae</taxon>
        <taxon>Arabidopsis</taxon>
    </lineage>
</organism>
<sequence length="714" mass="79698">MGCNCTKGTRPDNDNVDNSNSIVSNVNVKERRSKPKKTPKKKKKSKSASSSKDNNVGFEERSNDNKEASLTLLIPIDAKKDDESEKKVNLERKSSRLVFQRRPTGIEVGANNIGTLQQPKMTRICSVSNGERGAQVMAGWPSWLASVAGEAINGWIPRKADSFEKLEKIGQGTYSSVYKARDLETNQLVALKKVRFANMDPDSVRFMAREIIILRRLDHPNVMKLEGLITSRVSGSMYLIFEYMEHDLAGLASTPGINFSEAQIKCYMKQLLHGLEHCHSRGVLHRDIKGSNLLLDHNNNLKIGDFGLANFYQGHQKQPLTSRVVTLWYRPPELLLGSTDYGVTVDLWSTGCILAELFTGKPIMPGRTEVEQLHKIFKLCGSPSEEYWKISKLPHATIFKPQQPYKRCVAETFKSLPSSALALVEVLLAVEPDARGTTASALESEFFTTSPLASDPSSLPKYQPRKEIDVKAQEEEAKRKKDTSSKQNDSKQVSRESKAVPAPDSNAESLTSIQKRQGQHNQVSNSDKFNPGEDAASFRIEPLKSGTAKDGHTRYGVSSVNRNGENVMMGSSRSPRKELRTQRSFVQRGTAQLSRFSNSVAARDGSHFAIANPRWFEDSYNNNNGRQNGGAWSQRLVVKHKEFTKHKESITVNGEKKERMHCSGPLVSAGGNLDEMLKEHERQIQLAVRKARVDKKTNRGDNRQTQAFLAANGR</sequence>
<comment type="similarity">
    <text evidence="2">Belongs to the protein kinase superfamily. Ser/Thr protein kinase family.</text>
</comment>
<comment type="sequence caution" evidence="5">
    <conflict type="erroneous gene model prediction">
        <sequence resource="EMBL-CDS" id="AAC33218"/>
    </conflict>
    <text>The predicted gene At1g09600 has been split into 2 genes: At1g09600 and At1g09610.</text>
</comment>
<name>Y1960_ARATH</name>
<evidence type="ECO:0000255" key="1"/>
<evidence type="ECO:0000255" key="2">
    <source>
        <dbReference type="PROSITE-ProRule" id="PRU00159"/>
    </source>
</evidence>
<evidence type="ECO:0000255" key="3">
    <source>
        <dbReference type="PROSITE-ProRule" id="PRU10027"/>
    </source>
</evidence>
<evidence type="ECO:0000256" key="4">
    <source>
        <dbReference type="SAM" id="MobiDB-lite"/>
    </source>
</evidence>
<evidence type="ECO:0000305" key="5"/>
<proteinExistence type="inferred from homology"/>
<dbReference type="EC" id="2.7.11.-"/>
<dbReference type="EMBL" id="AC003970">
    <property type="protein sequence ID" value="AAC33218.1"/>
    <property type="status" value="ALT_SEQ"/>
    <property type="molecule type" value="Genomic_DNA"/>
</dbReference>
<dbReference type="EMBL" id="CP002684">
    <property type="protein sequence ID" value="AEE28467.1"/>
    <property type="molecule type" value="Genomic_DNA"/>
</dbReference>
<dbReference type="PIR" id="G86229">
    <property type="entry name" value="G86229"/>
</dbReference>
<dbReference type="RefSeq" id="NP_172431.1">
    <property type="nucleotide sequence ID" value="NM_100832.2"/>
</dbReference>
<dbReference type="SMR" id="F4I114"/>
<dbReference type="FunCoup" id="F4I114">
    <property type="interactions" value="677"/>
</dbReference>
<dbReference type="STRING" id="3702.F4I114"/>
<dbReference type="GlyGen" id="F4I114">
    <property type="glycosylation" value="1 site"/>
</dbReference>
<dbReference type="iPTMnet" id="F4I114"/>
<dbReference type="PaxDb" id="3702-AT1G09600.1"/>
<dbReference type="ProteomicsDB" id="232378"/>
<dbReference type="EnsemblPlants" id="AT1G09600.1">
    <property type="protein sequence ID" value="AT1G09600.1"/>
    <property type="gene ID" value="AT1G09600"/>
</dbReference>
<dbReference type="GeneID" id="837487"/>
<dbReference type="Gramene" id="AT1G09600.1">
    <property type="protein sequence ID" value="AT1G09600.1"/>
    <property type="gene ID" value="AT1G09600"/>
</dbReference>
<dbReference type="KEGG" id="ath:AT1G09600"/>
<dbReference type="Araport" id="AT1G09600"/>
<dbReference type="TAIR" id="AT1G09600"/>
<dbReference type="eggNOG" id="KOG0600">
    <property type="taxonomic scope" value="Eukaryota"/>
</dbReference>
<dbReference type="HOGENOM" id="CLU_000288_78_2_1"/>
<dbReference type="InParanoid" id="F4I114"/>
<dbReference type="OMA" id="HWPEERF"/>
<dbReference type="PRO" id="PR:F4I114"/>
<dbReference type="Proteomes" id="UP000006548">
    <property type="component" value="Chromosome 1"/>
</dbReference>
<dbReference type="ExpressionAtlas" id="F4I114">
    <property type="expression patterns" value="baseline and differential"/>
</dbReference>
<dbReference type="GO" id="GO:0005524">
    <property type="term" value="F:ATP binding"/>
    <property type="evidence" value="ECO:0007669"/>
    <property type="project" value="UniProtKB-KW"/>
</dbReference>
<dbReference type="GO" id="GO:0004674">
    <property type="term" value="F:protein serine/threonine kinase activity"/>
    <property type="evidence" value="ECO:0007669"/>
    <property type="project" value="UniProtKB-KW"/>
</dbReference>
<dbReference type="CDD" id="cd07840">
    <property type="entry name" value="STKc_CDK9_like"/>
    <property type="match status" value="1"/>
</dbReference>
<dbReference type="FunFam" id="1.10.510.10:FF:000043">
    <property type="entry name" value="probable serine/threonine-protein kinase At1g54610"/>
    <property type="match status" value="1"/>
</dbReference>
<dbReference type="FunFam" id="3.30.200.20:FF:000021">
    <property type="entry name" value="probable serine/threonine-protein kinase At1g54610"/>
    <property type="match status" value="1"/>
</dbReference>
<dbReference type="Gene3D" id="3.30.200.20">
    <property type="entry name" value="Phosphorylase Kinase, domain 1"/>
    <property type="match status" value="1"/>
</dbReference>
<dbReference type="Gene3D" id="1.10.510.10">
    <property type="entry name" value="Transferase(Phosphotransferase) domain 1"/>
    <property type="match status" value="1"/>
</dbReference>
<dbReference type="InterPro" id="IPR050108">
    <property type="entry name" value="CDK"/>
</dbReference>
<dbReference type="InterPro" id="IPR011009">
    <property type="entry name" value="Kinase-like_dom_sf"/>
</dbReference>
<dbReference type="InterPro" id="IPR000719">
    <property type="entry name" value="Prot_kinase_dom"/>
</dbReference>
<dbReference type="InterPro" id="IPR017441">
    <property type="entry name" value="Protein_kinase_ATP_BS"/>
</dbReference>
<dbReference type="InterPro" id="IPR008271">
    <property type="entry name" value="Ser/Thr_kinase_AS"/>
</dbReference>
<dbReference type="PANTHER" id="PTHR24056">
    <property type="entry name" value="CELL DIVISION PROTEIN KINASE"/>
    <property type="match status" value="1"/>
</dbReference>
<dbReference type="PANTHER" id="PTHR24056:SF397">
    <property type="entry name" value="OS11G0242500 PROTEIN"/>
    <property type="match status" value="1"/>
</dbReference>
<dbReference type="Pfam" id="PF00069">
    <property type="entry name" value="Pkinase"/>
    <property type="match status" value="1"/>
</dbReference>
<dbReference type="SMART" id="SM00220">
    <property type="entry name" value="S_TKc"/>
    <property type="match status" value="1"/>
</dbReference>
<dbReference type="SUPFAM" id="SSF56112">
    <property type="entry name" value="Protein kinase-like (PK-like)"/>
    <property type="match status" value="1"/>
</dbReference>
<dbReference type="PROSITE" id="PS00107">
    <property type="entry name" value="PROTEIN_KINASE_ATP"/>
    <property type="match status" value="1"/>
</dbReference>
<dbReference type="PROSITE" id="PS50011">
    <property type="entry name" value="PROTEIN_KINASE_DOM"/>
    <property type="match status" value="1"/>
</dbReference>
<dbReference type="PROSITE" id="PS00108">
    <property type="entry name" value="PROTEIN_KINASE_ST"/>
    <property type="match status" value="1"/>
</dbReference>
<reference key="1">
    <citation type="journal article" date="2000" name="Nature">
        <title>Sequence and analysis of chromosome 1 of the plant Arabidopsis thaliana.</title>
        <authorList>
            <person name="Theologis A."/>
            <person name="Ecker J.R."/>
            <person name="Palm C.J."/>
            <person name="Federspiel N.A."/>
            <person name="Kaul S."/>
            <person name="White O."/>
            <person name="Alonso J."/>
            <person name="Altafi H."/>
            <person name="Araujo R."/>
            <person name="Bowman C.L."/>
            <person name="Brooks S.Y."/>
            <person name="Buehler E."/>
            <person name="Chan A."/>
            <person name="Chao Q."/>
            <person name="Chen H."/>
            <person name="Cheuk R.F."/>
            <person name="Chin C.W."/>
            <person name="Chung M.K."/>
            <person name="Conn L."/>
            <person name="Conway A.B."/>
            <person name="Conway A.R."/>
            <person name="Creasy T.H."/>
            <person name="Dewar K."/>
            <person name="Dunn P."/>
            <person name="Etgu P."/>
            <person name="Feldblyum T.V."/>
            <person name="Feng J.-D."/>
            <person name="Fong B."/>
            <person name="Fujii C.Y."/>
            <person name="Gill J.E."/>
            <person name="Goldsmith A.D."/>
            <person name="Haas B."/>
            <person name="Hansen N.F."/>
            <person name="Hughes B."/>
            <person name="Huizar L."/>
            <person name="Hunter J.L."/>
            <person name="Jenkins J."/>
            <person name="Johnson-Hopson C."/>
            <person name="Khan S."/>
            <person name="Khaykin E."/>
            <person name="Kim C.J."/>
            <person name="Koo H.L."/>
            <person name="Kremenetskaia I."/>
            <person name="Kurtz D.B."/>
            <person name="Kwan A."/>
            <person name="Lam B."/>
            <person name="Langin-Hooper S."/>
            <person name="Lee A."/>
            <person name="Lee J.M."/>
            <person name="Lenz C.A."/>
            <person name="Li J.H."/>
            <person name="Li Y.-P."/>
            <person name="Lin X."/>
            <person name="Liu S.X."/>
            <person name="Liu Z.A."/>
            <person name="Luros J.S."/>
            <person name="Maiti R."/>
            <person name="Marziali A."/>
            <person name="Militscher J."/>
            <person name="Miranda M."/>
            <person name="Nguyen M."/>
            <person name="Nierman W.C."/>
            <person name="Osborne B.I."/>
            <person name="Pai G."/>
            <person name="Peterson J."/>
            <person name="Pham P.K."/>
            <person name="Rizzo M."/>
            <person name="Rooney T."/>
            <person name="Rowley D."/>
            <person name="Sakano H."/>
            <person name="Salzberg S.L."/>
            <person name="Schwartz J.R."/>
            <person name="Shinn P."/>
            <person name="Southwick A.M."/>
            <person name="Sun H."/>
            <person name="Tallon L.J."/>
            <person name="Tambunga G."/>
            <person name="Toriumi M.J."/>
            <person name="Town C.D."/>
            <person name="Utterback T."/>
            <person name="Van Aken S."/>
            <person name="Vaysberg M."/>
            <person name="Vysotskaia V.S."/>
            <person name="Walker M."/>
            <person name="Wu D."/>
            <person name="Yu G."/>
            <person name="Fraser C.M."/>
            <person name="Venter J.C."/>
            <person name="Davis R.W."/>
        </authorList>
    </citation>
    <scope>NUCLEOTIDE SEQUENCE [LARGE SCALE GENOMIC DNA]</scope>
    <source>
        <strain>cv. Columbia</strain>
    </source>
</reference>
<reference key="2">
    <citation type="journal article" date="2017" name="Plant J.">
        <title>Araport11: a complete reannotation of the Arabidopsis thaliana reference genome.</title>
        <authorList>
            <person name="Cheng C.Y."/>
            <person name="Krishnakumar V."/>
            <person name="Chan A.P."/>
            <person name="Thibaud-Nissen F."/>
            <person name="Schobel S."/>
            <person name="Town C.D."/>
        </authorList>
    </citation>
    <scope>GENOME REANNOTATION</scope>
    <source>
        <strain>cv. Columbia</strain>
    </source>
</reference>
<feature type="initiator methionine" description="Removed" evidence="1">
    <location>
        <position position="1"/>
    </location>
</feature>
<feature type="chain" id="PRO_0000420836" description="Probable serine/threonine-protein kinase At1g09600">
    <location>
        <begin position="2"/>
        <end position="714"/>
    </location>
</feature>
<feature type="domain" description="Protein kinase" evidence="2">
    <location>
        <begin position="163"/>
        <end position="447"/>
    </location>
</feature>
<feature type="region of interest" description="Disordered" evidence="4">
    <location>
        <begin position="1"/>
        <end position="64"/>
    </location>
</feature>
<feature type="region of interest" description="Disordered" evidence="4">
    <location>
        <begin position="471"/>
        <end position="579"/>
    </location>
</feature>
<feature type="region of interest" description="Disordered" evidence="4">
    <location>
        <begin position="693"/>
        <end position="714"/>
    </location>
</feature>
<feature type="compositionally biased region" description="Low complexity" evidence="4">
    <location>
        <begin position="16"/>
        <end position="27"/>
    </location>
</feature>
<feature type="compositionally biased region" description="Basic residues" evidence="4">
    <location>
        <begin position="31"/>
        <end position="46"/>
    </location>
</feature>
<feature type="compositionally biased region" description="Basic and acidic residues" evidence="4">
    <location>
        <begin position="471"/>
        <end position="498"/>
    </location>
</feature>
<feature type="compositionally biased region" description="Polar residues" evidence="4">
    <location>
        <begin position="506"/>
        <end position="528"/>
    </location>
</feature>
<feature type="compositionally biased region" description="Polar residues" evidence="4">
    <location>
        <begin position="556"/>
        <end position="573"/>
    </location>
</feature>
<feature type="active site" description="Proton acceptor" evidence="2 3">
    <location>
        <position position="287"/>
    </location>
</feature>
<feature type="binding site" evidence="2">
    <location>
        <begin position="169"/>
        <end position="177"/>
    </location>
    <ligand>
        <name>ATP</name>
        <dbReference type="ChEBI" id="CHEBI:30616"/>
    </ligand>
</feature>
<feature type="binding site" evidence="2">
    <location>
        <position position="192"/>
    </location>
    <ligand>
        <name>ATP</name>
        <dbReference type="ChEBI" id="CHEBI:30616"/>
    </ligand>
</feature>
<feature type="lipid moiety-binding region" description="N-myristoyl glycine" evidence="1">
    <location>
        <position position="2"/>
    </location>
</feature>
<accession>F4I114</accession>
<accession>O80540</accession>
<gene>
    <name type="ordered locus">At1g09600</name>
    <name type="ORF">F14J9.26</name>
</gene>
<protein>
    <recommendedName>
        <fullName>Probable serine/threonine-protein kinase At1g09600</fullName>
        <ecNumber>2.7.11.-</ecNumber>
    </recommendedName>
</protein>
<keyword id="KW-0067">ATP-binding</keyword>
<keyword id="KW-0418">Kinase</keyword>
<keyword id="KW-0449">Lipoprotein</keyword>
<keyword id="KW-0519">Myristate</keyword>
<keyword id="KW-0547">Nucleotide-binding</keyword>
<keyword id="KW-1185">Reference proteome</keyword>
<keyword id="KW-0723">Serine/threonine-protein kinase</keyword>
<keyword id="KW-0808">Transferase</keyword>